<accession>Q9CPU2</accession>
<evidence type="ECO:0000250" key="1"/>
<evidence type="ECO:0000256" key="2">
    <source>
        <dbReference type="SAM" id="MobiDB-lite"/>
    </source>
</evidence>
<evidence type="ECO:0000269" key="3">
    <source>
    </source>
</evidence>
<evidence type="ECO:0000305" key="4"/>
<evidence type="ECO:0007744" key="5">
    <source>
        <dbReference type="PDB" id="8PW5"/>
    </source>
</evidence>
<evidence type="ECO:0007829" key="6">
    <source>
        <dbReference type="PDB" id="8IBB"/>
    </source>
</evidence>
<evidence type="ECO:0007829" key="7">
    <source>
        <dbReference type="PDB" id="8OM1"/>
    </source>
</evidence>
<evidence type="ECO:0007829" key="8">
    <source>
        <dbReference type="PDB" id="8RGR"/>
    </source>
</evidence>
<reference key="1">
    <citation type="journal article" date="2005" name="Science">
        <title>The transcriptional landscape of the mammalian genome.</title>
        <authorList>
            <person name="Carninci P."/>
            <person name="Kasukawa T."/>
            <person name="Katayama S."/>
            <person name="Gough J."/>
            <person name="Frith M.C."/>
            <person name="Maeda N."/>
            <person name="Oyama R."/>
            <person name="Ravasi T."/>
            <person name="Lenhard B."/>
            <person name="Wells C."/>
            <person name="Kodzius R."/>
            <person name="Shimokawa K."/>
            <person name="Bajic V.B."/>
            <person name="Brenner S.E."/>
            <person name="Batalov S."/>
            <person name="Forrest A.R."/>
            <person name="Zavolan M."/>
            <person name="Davis M.J."/>
            <person name="Wilming L.G."/>
            <person name="Aidinis V."/>
            <person name="Allen J.E."/>
            <person name="Ambesi-Impiombato A."/>
            <person name="Apweiler R."/>
            <person name="Aturaliya R.N."/>
            <person name="Bailey T.L."/>
            <person name="Bansal M."/>
            <person name="Baxter L."/>
            <person name="Beisel K.W."/>
            <person name="Bersano T."/>
            <person name="Bono H."/>
            <person name="Chalk A.M."/>
            <person name="Chiu K.P."/>
            <person name="Choudhary V."/>
            <person name="Christoffels A."/>
            <person name="Clutterbuck D.R."/>
            <person name="Crowe M.L."/>
            <person name="Dalla E."/>
            <person name="Dalrymple B.P."/>
            <person name="de Bono B."/>
            <person name="Della Gatta G."/>
            <person name="di Bernardo D."/>
            <person name="Down T."/>
            <person name="Engstrom P."/>
            <person name="Fagiolini M."/>
            <person name="Faulkner G."/>
            <person name="Fletcher C.F."/>
            <person name="Fukushima T."/>
            <person name="Furuno M."/>
            <person name="Futaki S."/>
            <person name="Gariboldi M."/>
            <person name="Georgii-Hemming P."/>
            <person name="Gingeras T.R."/>
            <person name="Gojobori T."/>
            <person name="Green R.E."/>
            <person name="Gustincich S."/>
            <person name="Harbers M."/>
            <person name="Hayashi Y."/>
            <person name="Hensch T.K."/>
            <person name="Hirokawa N."/>
            <person name="Hill D."/>
            <person name="Huminiecki L."/>
            <person name="Iacono M."/>
            <person name="Ikeo K."/>
            <person name="Iwama A."/>
            <person name="Ishikawa T."/>
            <person name="Jakt M."/>
            <person name="Kanapin A."/>
            <person name="Katoh M."/>
            <person name="Kawasawa Y."/>
            <person name="Kelso J."/>
            <person name="Kitamura H."/>
            <person name="Kitano H."/>
            <person name="Kollias G."/>
            <person name="Krishnan S.P."/>
            <person name="Kruger A."/>
            <person name="Kummerfeld S.K."/>
            <person name="Kurochkin I.V."/>
            <person name="Lareau L.F."/>
            <person name="Lazarevic D."/>
            <person name="Lipovich L."/>
            <person name="Liu J."/>
            <person name="Liuni S."/>
            <person name="McWilliam S."/>
            <person name="Madan Babu M."/>
            <person name="Madera M."/>
            <person name="Marchionni L."/>
            <person name="Matsuda H."/>
            <person name="Matsuzawa S."/>
            <person name="Miki H."/>
            <person name="Mignone F."/>
            <person name="Miyake S."/>
            <person name="Morris K."/>
            <person name="Mottagui-Tabar S."/>
            <person name="Mulder N."/>
            <person name="Nakano N."/>
            <person name="Nakauchi H."/>
            <person name="Ng P."/>
            <person name="Nilsson R."/>
            <person name="Nishiguchi S."/>
            <person name="Nishikawa S."/>
            <person name="Nori F."/>
            <person name="Ohara O."/>
            <person name="Okazaki Y."/>
            <person name="Orlando V."/>
            <person name="Pang K.C."/>
            <person name="Pavan W.J."/>
            <person name="Pavesi G."/>
            <person name="Pesole G."/>
            <person name="Petrovsky N."/>
            <person name="Piazza S."/>
            <person name="Reed J."/>
            <person name="Reid J.F."/>
            <person name="Ring B.Z."/>
            <person name="Ringwald M."/>
            <person name="Rost B."/>
            <person name="Ruan Y."/>
            <person name="Salzberg S.L."/>
            <person name="Sandelin A."/>
            <person name="Schneider C."/>
            <person name="Schoenbach C."/>
            <person name="Sekiguchi K."/>
            <person name="Semple C.A."/>
            <person name="Seno S."/>
            <person name="Sessa L."/>
            <person name="Sheng Y."/>
            <person name="Shibata Y."/>
            <person name="Shimada H."/>
            <person name="Shimada K."/>
            <person name="Silva D."/>
            <person name="Sinclair B."/>
            <person name="Sperling S."/>
            <person name="Stupka E."/>
            <person name="Sugiura K."/>
            <person name="Sultana R."/>
            <person name="Takenaka Y."/>
            <person name="Taki K."/>
            <person name="Tammoja K."/>
            <person name="Tan S.L."/>
            <person name="Tang S."/>
            <person name="Taylor M.S."/>
            <person name="Tegner J."/>
            <person name="Teichmann S.A."/>
            <person name="Ueda H.R."/>
            <person name="van Nimwegen E."/>
            <person name="Verardo R."/>
            <person name="Wei C.L."/>
            <person name="Yagi K."/>
            <person name="Yamanishi H."/>
            <person name="Zabarovsky E."/>
            <person name="Zhu S."/>
            <person name="Zimmer A."/>
            <person name="Hide W."/>
            <person name="Bult C."/>
            <person name="Grimmond S.M."/>
            <person name="Teasdale R.D."/>
            <person name="Liu E.T."/>
            <person name="Brusic V."/>
            <person name="Quackenbush J."/>
            <person name="Wahlestedt C."/>
            <person name="Mattick J.S."/>
            <person name="Hume D.A."/>
            <person name="Kai C."/>
            <person name="Sasaki D."/>
            <person name="Tomaru Y."/>
            <person name="Fukuda S."/>
            <person name="Kanamori-Katayama M."/>
            <person name="Suzuki M."/>
            <person name="Aoki J."/>
            <person name="Arakawa T."/>
            <person name="Iida J."/>
            <person name="Imamura K."/>
            <person name="Itoh M."/>
            <person name="Kato T."/>
            <person name="Kawaji H."/>
            <person name="Kawagashira N."/>
            <person name="Kawashima T."/>
            <person name="Kojima M."/>
            <person name="Kondo S."/>
            <person name="Konno H."/>
            <person name="Nakano K."/>
            <person name="Ninomiya N."/>
            <person name="Nishio T."/>
            <person name="Okada M."/>
            <person name="Plessy C."/>
            <person name="Shibata K."/>
            <person name="Shiraki T."/>
            <person name="Suzuki S."/>
            <person name="Tagami M."/>
            <person name="Waki K."/>
            <person name="Watahiki A."/>
            <person name="Okamura-Oho Y."/>
            <person name="Suzuki H."/>
            <person name="Kawai J."/>
            <person name="Hayashizaki Y."/>
        </authorList>
    </citation>
    <scope>NUCLEOTIDE SEQUENCE [LARGE SCALE MRNA]</scope>
    <source>
        <strain>C57BL/6J</strain>
        <tissue>Embryo</tissue>
        <tissue>Embryonic stem cell</tissue>
        <tissue>Pancreas</tissue>
    </source>
</reference>
<reference key="2">
    <citation type="journal article" date="2004" name="Genome Res.">
        <title>The status, quality, and expansion of the NIH full-length cDNA project: the Mammalian Gene Collection (MGC).</title>
        <authorList>
            <consortium name="The MGC Project Team"/>
        </authorList>
    </citation>
    <scope>NUCLEOTIDE SEQUENCE [LARGE SCALE MRNA]</scope>
    <source>
        <tissue>Colon</tissue>
    </source>
</reference>
<reference key="3">
    <citation type="journal article" date="2010" name="Cell">
        <title>A tissue-specific atlas of mouse protein phosphorylation and expression.</title>
        <authorList>
            <person name="Huttlin E.L."/>
            <person name="Jedrychowski M.P."/>
            <person name="Elias J.E."/>
            <person name="Goswami T."/>
            <person name="Rad R."/>
            <person name="Beausoleil S.A."/>
            <person name="Villen J."/>
            <person name="Haas W."/>
            <person name="Sowa M.E."/>
            <person name="Gygi S.P."/>
        </authorList>
    </citation>
    <scope>IDENTIFICATION BY MASS SPECTROMETRY [LARGE SCALE ANALYSIS]</scope>
    <source>
        <tissue>Brain</tissue>
        <tissue>Brown adipose tissue</tissue>
        <tissue>Heart</tissue>
        <tissue>Kidney</tissue>
        <tissue>Liver</tissue>
        <tissue>Pancreas</tissue>
    </source>
</reference>
<reference evidence="5" key="4">
    <citation type="journal article" date="2024" name="Nat. Struct. Mol. Biol.">
        <title>SCAF1 drives the compositional diversity of mammalian respirasomes.</title>
        <authorList>
            <person name="Vercellino I."/>
            <person name="Sazanov L.A."/>
        </authorList>
    </citation>
    <scope>STRUCTURE BY ELECTRON MICROSCOPY (3.60 ANGSTROMS) IN COMPLEX WITH MITOCHONDRIAL RESPIRATORY SUPERCOMPLEX</scope>
    <scope>FUNCTION</scope>
    <scope>SUBCELLULAR LOCATION</scope>
    <scope>SUBUNIT</scope>
</reference>
<sequence>MSALTRLVPFGRVGGRLLRGCRARAAGDSGVRHAGGGVHIQPRYREFPQLTRSQVIQGEFLSSLMWFWILWRFWHDSDAVLGHFSYPDPSQWTDEELGIPPDDED</sequence>
<comment type="function">
    <text evidence="3">Accessory subunit of the mitochondrial membrane respiratory chain NADH dehydrogenase (Complex I), that is believed not to be involved in catalysis (PubMed:38575788). Complex I functions in the transfer of electrons from NADH to the respiratory chain (PubMed:38575788). The immediate electron acceptor for the enzyme is believed to be ubiquinone (PubMed:38575788).</text>
</comment>
<comment type="subunit">
    <text evidence="3">Complex I is composed of 45 different subunits.</text>
</comment>
<comment type="subcellular location">
    <subcellularLocation>
        <location evidence="3">Mitochondrion inner membrane</location>
        <topology evidence="3">Peripheral membrane protein</topology>
        <orientation evidence="3">Matrix side</orientation>
    </subcellularLocation>
</comment>
<comment type="similarity">
    <text evidence="4">Belongs to the complex I NDUFB2 subunit family.</text>
</comment>
<organism>
    <name type="scientific">Mus musculus</name>
    <name type="common">Mouse</name>
    <dbReference type="NCBI Taxonomy" id="10090"/>
    <lineage>
        <taxon>Eukaryota</taxon>
        <taxon>Metazoa</taxon>
        <taxon>Chordata</taxon>
        <taxon>Craniata</taxon>
        <taxon>Vertebrata</taxon>
        <taxon>Euteleostomi</taxon>
        <taxon>Mammalia</taxon>
        <taxon>Eutheria</taxon>
        <taxon>Euarchontoglires</taxon>
        <taxon>Glires</taxon>
        <taxon>Rodentia</taxon>
        <taxon>Myomorpha</taxon>
        <taxon>Muroidea</taxon>
        <taxon>Muridae</taxon>
        <taxon>Murinae</taxon>
        <taxon>Mus</taxon>
        <taxon>Mus</taxon>
    </lineage>
</organism>
<proteinExistence type="evidence at protein level"/>
<protein>
    <recommendedName>
        <fullName>NADH dehydrogenase [ubiquinone] 1 beta subcomplex subunit 2, mitochondrial</fullName>
    </recommendedName>
    <alternativeName>
        <fullName>Complex I-AGGG</fullName>
        <shortName>CI-AGGG</shortName>
    </alternativeName>
    <alternativeName>
        <fullName>NADH-ubiquinone oxidoreductase AGGG subunit</fullName>
    </alternativeName>
</protein>
<keyword id="KW-0002">3D-structure</keyword>
<keyword id="KW-0249">Electron transport</keyword>
<keyword id="KW-0472">Membrane</keyword>
<keyword id="KW-0496">Mitochondrion</keyword>
<keyword id="KW-0999">Mitochondrion inner membrane</keyword>
<keyword id="KW-1185">Reference proteome</keyword>
<keyword id="KW-0679">Respiratory chain</keyword>
<keyword id="KW-0809">Transit peptide</keyword>
<keyword id="KW-0813">Transport</keyword>
<dbReference type="EMBL" id="AK007495">
    <property type="protein sequence ID" value="BAB25068.1"/>
    <property type="molecule type" value="mRNA"/>
</dbReference>
<dbReference type="EMBL" id="AK010642">
    <property type="protein sequence ID" value="BAB27084.1"/>
    <property type="molecule type" value="mRNA"/>
</dbReference>
<dbReference type="EMBL" id="AK019008">
    <property type="protein sequence ID" value="BAB31508.1"/>
    <property type="molecule type" value="mRNA"/>
</dbReference>
<dbReference type="EMBL" id="AK028334">
    <property type="protein sequence ID" value="BAC25887.1"/>
    <property type="molecule type" value="mRNA"/>
</dbReference>
<dbReference type="EMBL" id="BC013510">
    <property type="protein sequence ID" value="AAH13510.1"/>
    <property type="molecule type" value="mRNA"/>
</dbReference>
<dbReference type="CCDS" id="CCDS20025.1"/>
<dbReference type="RefSeq" id="NP_001345726.1">
    <property type="nucleotide sequence ID" value="NM_001358797.1"/>
</dbReference>
<dbReference type="RefSeq" id="NP_080888.1">
    <property type="nucleotide sequence ID" value="NM_026612.4"/>
</dbReference>
<dbReference type="RefSeq" id="XP_006506592.1">
    <property type="nucleotide sequence ID" value="XM_006506529.3"/>
</dbReference>
<dbReference type="PDB" id="6G2J">
    <property type="method" value="EM"/>
    <property type="resolution" value="3.30 A"/>
    <property type="chains" value="j=1-105"/>
</dbReference>
<dbReference type="PDB" id="6G72">
    <property type="method" value="EM"/>
    <property type="resolution" value="3.90 A"/>
    <property type="chains" value="j=1-105"/>
</dbReference>
<dbReference type="PDB" id="6ZR2">
    <property type="method" value="EM"/>
    <property type="resolution" value="3.10 A"/>
    <property type="chains" value="j=1-105"/>
</dbReference>
<dbReference type="PDB" id="6ZTQ">
    <property type="method" value="EM"/>
    <property type="resolution" value="3.00 A"/>
    <property type="chains" value="j=1-105"/>
</dbReference>
<dbReference type="PDB" id="7AK5">
    <property type="method" value="EM"/>
    <property type="resolution" value="3.17 A"/>
    <property type="chains" value="j=1-105"/>
</dbReference>
<dbReference type="PDB" id="7AK6">
    <property type="method" value="EM"/>
    <property type="resolution" value="3.82 A"/>
    <property type="chains" value="j=1-105"/>
</dbReference>
<dbReference type="PDB" id="7B93">
    <property type="method" value="EM"/>
    <property type="resolution" value="3.04 A"/>
    <property type="chains" value="j=1-105"/>
</dbReference>
<dbReference type="PDB" id="7PSA">
    <property type="method" value="EM"/>
    <property type="resolution" value="3.40 A"/>
    <property type="chains" value="j=1-105"/>
</dbReference>
<dbReference type="PDB" id="8C2S">
    <property type="method" value="EM"/>
    <property type="resolution" value="3.90 A"/>
    <property type="chains" value="j=1-105"/>
</dbReference>
<dbReference type="PDB" id="8CA3">
    <property type="method" value="EM"/>
    <property type="resolution" value="3.20 A"/>
    <property type="chains" value="j=1-105"/>
</dbReference>
<dbReference type="PDB" id="8CA5">
    <property type="method" value="EM"/>
    <property type="resolution" value="3.90 A"/>
    <property type="chains" value="j=1-105"/>
</dbReference>
<dbReference type="PDB" id="8IAO">
    <property type="method" value="EM"/>
    <property type="resolution" value="4.20 A"/>
    <property type="chains" value="j=1-105"/>
</dbReference>
<dbReference type="PDB" id="8IAQ">
    <property type="method" value="EM"/>
    <property type="resolution" value="3.40 A"/>
    <property type="chains" value="j=1-105"/>
</dbReference>
<dbReference type="PDB" id="8IB4">
    <property type="method" value="EM"/>
    <property type="resolution" value="4.30 A"/>
    <property type="chains" value="j=1-105"/>
</dbReference>
<dbReference type="PDB" id="8IB6">
    <property type="method" value="EM"/>
    <property type="resolution" value="3.30 A"/>
    <property type="chains" value="j=1-105"/>
</dbReference>
<dbReference type="PDB" id="8IB9">
    <property type="method" value="EM"/>
    <property type="resolution" value="4.30 A"/>
    <property type="chains" value="j=1-105"/>
</dbReference>
<dbReference type="PDB" id="8IBB">
    <property type="method" value="EM"/>
    <property type="resolution" value="3.30 A"/>
    <property type="chains" value="j=1-105"/>
</dbReference>
<dbReference type="PDB" id="8IBD">
    <property type="method" value="EM"/>
    <property type="resolution" value="4.20 A"/>
    <property type="chains" value="j=1-105"/>
</dbReference>
<dbReference type="PDB" id="8IBF">
    <property type="method" value="EM"/>
    <property type="resolution" value="3.30 A"/>
    <property type="chains" value="j=1-105"/>
</dbReference>
<dbReference type="PDB" id="8IC2">
    <property type="method" value="EM"/>
    <property type="resolution" value="6.30 A"/>
    <property type="chains" value="j=1-105"/>
</dbReference>
<dbReference type="PDB" id="8IC4">
    <property type="method" value="EM"/>
    <property type="resolution" value="3.20 A"/>
    <property type="chains" value="j=1-105"/>
</dbReference>
<dbReference type="PDB" id="8OLT">
    <property type="method" value="EM"/>
    <property type="resolution" value="2.84 A"/>
    <property type="chains" value="j=1-105"/>
</dbReference>
<dbReference type="PDB" id="8OM1">
    <property type="method" value="EM"/>
    <property type="resolution" value="2.39 A"/>
    <property type="chains" value="j=1-105"/>
</dbReference>
<dbReference type="PDB" id="8PW5">
    <property type="method" value="EM"/>
    <property type="resolution" value="3.60 A"/>
    <property type="chains" value="j1=1-105"/>
</dbReference>
<dbReference type="PDB" id="8PW6">
    <property type="method" value="EM"/>
    <property type="resolution" value="3.30 A"/>
    <property type="chains" value="j1=1-105"/>
</dbReference>
<dbReference type="PDB" id="8PW7">
    <property type="method" value="EM"/>
    <property type="resolution" value="3.50 A"/>
    <property type="chains" value="j1=1-105"/>
</dbReference>
<dbReference type="PDB" id="8RGP">
    <property type="method" value="EM"/>
    <property type="resolution" value="3.00 A"/>
    <property type="chains" value="j=1-105"/>
</dbReference>
<dbReference type="PDB" id="8RGQ">
    <property type="method" value="EM"/>
    <property type="resolution" value="3.00 A"/>
    <property type="chains" value="j=1-105"/>
</dbReference>
<dbReference type="PDB" id="8RGR">
    <property type="method" value="EM"/>
    <property type="resolution" value="2.90 A"/>
    <property type="chains" value="j=1-105"/>
</dbReference>
<dbReference type="PDB" id="8RGT">
    <property type="method" value="EM"/>
    <property type="resolution" value="3.10 A"/>
    <property type="chains" value="j=1-105"/>
</dbReference>
<dbReference type="PDB" id="8UCA">
    <property type="method" value="EM"/>
    <property type="resolution" value="3.70 A"/>
    <property type="chains" value="B2/b2=1-105"/>
</dbReference>
<dbReference type="PDBsum" id="6G2J"/>
<dbReference type="PDBsum" id="6G72"/>
<dbReference type="PDBsum" id="6ZR2"/>
<dbReference type="PDBsum" id="6ZTQ"/>
<dbReference type="PDBsum" id="7AK5"/>
<dbReference type="PDBsum" id="7AK6"/>
<dbReference type="PDBsum" id="7B93"/>
<dbReference type="PDBsum" id="7PSA"/>
<dbReference type="PDBsum" id="8C2S"/>
<dbReference type="PDBsum" id="8CA3"/>
<dbReference type="PDBsum" id="8CA5"/>
<dbReference type="PDBsum" id="8IAO"/>
<dbReference type="PDBsum" id="8IAQ"/>
<dbReference type="PDBsum" id="8IB4"/>
<dbReference type="PDBsum" id="8IB6"/>
<dbReference type="PDBsum" id="8IB9"/>
<dbReference type="PDBsum" id="8IBB"/>
<dbReference type="PDBsum" id="8IBD"/>
<dbReference type="PDBsum" id="8IBF"/>
<dbReference type="PDBsum" id="8IC2"/>
<dbReference type="PDBsum" id="8IC4"/>
<dbReference type="PDBsum" id="8OLT"/>
<dbReference type="PDBsum" id="8OM1"/>
<dbReference type="PDBsum" id="8PW5"/>
<dbReference type="PDBsum" id="8PW6"/>
<dbReference type="PDBsum" id="8PW7"/>
<dbReference type="PDBsum" id="8RGP"/>
<dbReference type="PDBsum" id="8RGQ"/>
<dbReference type="PDBsum" id="8RGR"/>
<dbReference type="PDBsum" id="8RGT"/>
<dbReference type="PDBsum" id="8UCA"/>
<dbReference type="EMDB" id="EMD-11377"/>
<dbReference type="EMDB" id="EMD-11424"/>
<dbReference type="EMDB" id="EMD-11810"/>
<dbReference type="EMDB" id="EMD-11811"/>
<dbReference type="EMDB" id="EMD-12095"/>
<dbReference type="EMDB" id="EMD-13611"/>
<dbReference type="EMDB" id="EMD-16398"/>
<dbReference type="EMDB" id="EMD-16516"/>
<dbReference type="EMDB" id="EMD-16518"/>
<dbReference type="EMDB" id="EMD-16962"/>
<dbReference type="EMDB" id="EMD-16965"/>
<dbReference type="EMDB" id="EMD-17989"/>
<dbReference type="EMDB" id="EMD-17990"/>
<dbReference type="EMDB" id="EMD-17991"/>
<dbReference type="EMDB" id="EMD-19145"/>
<dbReference type="EMDB" id="EMD-19146"/>
<dbReference type="EMDB" id="EMD-19147"/>
<dbReference type="EMDB" id="EMD-19148"/>
<dbReference type="EMDB" id="EMD-35313"/>
<dbReference type="EMDB" id="EMD-35315"/>
<dbReference type="EMDB" id="EMD-35331"/>
<dbReference type="EMDB" id="EMD-35333"/>
<dbReference type="EMDB" id="EMD-35336"/>
<dbReference type="EMDB" id="EMD-35338"/>
<dbReference type="EMDB" id="EMD-35340"/>
<dbReference type="EMDB" id="EMD-35342"/>
<dbReference type="EMDB" id="EMD-35352"/>
<dbReference type="EMDB" id="EMD-35354"/>
<dbReference type="EMDB" id="EMD-42122"/>
<dbReference type="EMDB" id="EMD-4345"/>
<dbReference type="EMDB" id="EMD-4356"/>
<dbReference type="SMR" id="Q9CPU2"/>
<dbReference type="ComplexPortal" id="CPX-266">
    <property type="entry name" value="Mitochondrial respiratory chain complex I"/>
</dbReference>
<dbReference type="CORUM" id="Q9CPU2"/>
<dbReference type="FunCoup" id="Q9CPU2">
    <property type="interactions" value="632"/>
</dbReference>
<dbReference type="IntAct" id="Q9CPU2">
    <property type="interactions" value="1"/>
</dbReference>
<dbReference type="STRING" id="10090.ENSMUSP00000118918"/>
<dbReference type="GlyGen" id="Q9CPU2">
    <property type="glycosylation" value="1 site, 1 O-linked glycan (1 site)"/>
</dbReference>
<dbReference type="PhosphoSitePlus" id="Q9CPU2"/>
<dbReference type="jPOST" id="Q9CPU2"/>
<dbReference type="PaxDb" id="10090-ENSMUSP00000114095"/>
<dbReference type="PeptideAtlas" id="Q9CPU2"/>
<dbReference type="ProteomicsDB" id="252797"/>
<dbReference type="TopDownProteomics" id="Q9CPU2"/>
<dbReference type="Antibodypedia" id="46193">
    <property type="antibodies" value="62 antibodies from 22 providers"/>
</dbReference>
<dbReference type="DNASU" id="68198"/>
<dbReference type="Ensembl" id="ENSMUST00000119379.2">
    <property type="protein sequence ID" value="ENSMUSP00000114095.2"/>
    <property type="gene ID" value="ENSMUSG00000002416.14"/>
</dbReference>
<dbReference type="Ensembl" id="ENSMUST00000135671.8">
    <property type="protein sequence ID" value="ENSMUSP00000118918.2"/>
    <property type="gene ID" value="ENSMUSG00000002416.14"/>
</dbReference>
<dbReference type="GeneID" id="68198"/>
<dbReference type="KEGG" id="mmu:68198"/>
<dbReference type="UCSC" id="uc009bmc.1">
    <property type="organism name" value="mouse"/>
</dbReference>
<dbReference type="AGR" id="MGI:1915448"/>
<dbReference type="CTD" id="4708"/>
<dbReference type="MGI" id="MGI:1915448">
    <property type="gene designation" value="Ndufb2"/>
</dbReference>
<dbReference type="VEuPathDB" id="HostDB:ENSMUSG00000002416"/>
<dbReference type="eggNOG" id="ENOG502S524">
    <property type="taxonomic scope" value="Eukaryota"/>
</dbReference>
<dbReference type="GeneTree" id="ENSGT00390000004044"/>
<dbReference type="HOGENOM" id="CLU_177133_1_0_1"/>
<dbReference type="InParanoid" id="Q9CPU2"/>
<dbReference type="OMA" id="HLWHDPD"/>
<dbReference type="OrthoDB" id="6241903at2759"/>
<dbReference type="PhylomeDB" id="Q9CPU2"/>
<dbReference type="TreeFam" id="TF316619"/>
<dbReference type="Reactome" id="R-MMU-611105">
    <property type="pathway name" value="Respiratory electron transport"/>
</dbReference>
<dbReference type="Reactome" id="R-MMU-6799198">
    <property type="pathway name" value="Complex I biogenesis"/>
</dbReference>
<dbReference type="BioGRID-ORCS" id="68198">
    <property type="hits" value="17 hits in 76 CRISPR screens"/>
</dbReference>
<dbReference type="ChiTaRS" id="Ndufb2">
    <property type="organism name" value="mouse"/>
</dbReference>
<dbReference type="PRO" id="PR:Q9CPU2"/>
<dbReference type="Proteomes" id="UP000000589">
    <property type="component" value="Chromosome 6"/>
</dbReference>
<dbReference type="RNAct" id="Q9CPU2">
    <property type="molecule type" value="protein"/>
</dbReference>
<dbReference type="Bgee" id="ENSMUSG00000002416">
    <property type="expression patterns" value="Expressed in interventricular septum and 271 other cell types or tissues"/>
</dbReference>
<dbReference type="GO" id="GO:0005743">
    <property type="term" value="C:mitochondrial inner membrane"/>
    <property type="evidence" value="ECO:0000314"/>
    <property type="project" value="UniProtKB"/>
</dbReference>
<dbReference type="GO" id="GO:0005739">
    <property type="term" value="C:mitochondrion"/>
    <property type="evidence" value="ECO:0007005"/>
    <property type="project" value="MGI"/>
</dbReference>
<dbReference type="GO" id="GO:0045271">
    <property type="term" value="C:respiratory chain complex I"/>
    <property type="evidence" value="ECO:0000314"/>
    <property type="project" value="UniProtKB"/>
</dbReference>
<dbReference type="GO" id="GO:0009060">
    <property type="term" value="P:aerobic respiration"/>
    <property type="evidence" value="ECO:0000303"/>
    <property type="project" value="ComplexPortal"/>
</dbReference>
<dbReference type="GO" id="GO:0042776">
    <property type="term" value="P:proton motive force-driven mitochondrial ATP synthesis"/>
    <property type="evidence" value="ECO:0000303"/>
    <property type="project" value="ComplexPortal"/>
</dbReference>
<dbReference type="InterPro" id="IPR026627">
    <property type="entry name" value="NDUFB2_animal"/>
</dbReference>
<dbReference type="PANTHER" id="PTHR15223:SF1">
    <property type="entry name" value="NADH DEHYDROGENASE [UBIQUINONE] 1 BETA SUBCOMPLEX SUBUNIT 2, MITOCHONDRIAL"/>
    <property type="match status" value="1"/>
</dbReference>
<dbReference type="PANTHER" id="PTHR15223">
    <property type="entry name" value="NADH-UBIQUINONE OXIDOREDUCTASE AGGG SUBUNIT"/>
    <property type="match status" value="1"/>
</dbReference>
<dbReference type="Pfam" id="PF14813">
    <property type="entry name" value="NADH_B2"/>
    <property type="match status" value="1"/>
</dbReference>
<feature type="transit peptide" description="Mitochondrion" evidence="1">
    <location>
        <begin position="1"/>
        <end position="33"/>
    </location>
</feature>
<feature type="chain" id="PRO_0000020043" description="NADH dehydrogenase [ubiquinone] 1 beta subcomplex subunit 2, mitochondrial">
    <location>
        <begin position="34"/>
        <end position="105"/>
    </location>
</feature>
<feature type="region of interest" description="Disordered" evidence="2">
    <location>
        <begin position="86"/>
        <end position="105"/>
    </location>
</feature>
<feature type="compositionally biased region" description="Acidic residues" evidence="2">
    <location>
        <begin position="93"/>
        <end position="105"/>
    </location>
</feature>
<feature type="strand" evidence="6">
    <location>
        <begin position="38"/>
        <end position="40"/>
    </location>
</feature>
<feature type="strand" evidence="7">
    <location>
        <begin position="43"/>
        <end position="46"/>
    </location>
</feature>
<feature type="helix" evidence="7">
    <location>
        <begin position="52"/>
        <end position="75"/>
    </location>
</feature>
<feature type="helix" evidence="7">
    <location>
        <begin position="78"/>
        <end position="81"/>
    </location>
</feature>
<feature type="turn" evidence="8">
    <location>
        <begin position="82"/>
        <end position="84"/>
    </location>
</feature>
<feature type="helix" evidence="7">
    <location>
        <begin position="89"/>
        <end position="91"/>
    </location>
</feature>
<feature type="helix" evidence="7">
    <location>
        <begin position="94"/>
        <end position="97"/>
    </location>
</feature>
<gene>
    <name type="primary">Ndufb2</name>
</gene>
<name>NDUB2_MOUSE</name>